<protein>
    <recommendedName>
        <fullName evidence="2">Virion infectivity factor</fullName>
        <shortName evidence="2">Vif</shortName>
    </recommendedName>
    <alternativeName>
        <fullName evidence="2">SOR protein</fullName>
    </alternativeName>
    <component>
        <recommendedName>
            <fullName evidence="2">p17</fullName>
        </recommendedName>
    </component>
    <component>
        <recommendedName>
            <fullName evidence="2">p7</fullName>
        </recommendedName>
    </component>
</protein>
<keyword id="KW-0014">AIDS</keyword>
<keyword id="KW-1032">Host cell membrane</keyword>
<keyword id="KW-1035">Host cytoplasm</keyword>
<keyword id="KW-1043">Host membrane</keyword>
<keyword id="KW-0945">Host-virus interaction</keyword>
<keyword id="KW-0472">Membrane</keyword>
<keyword id="KW-0479">Metal-binding</keyword>
<keyword id="KW-0597">Phosphoprotein</keyword>
<keyword id="KW-1185">Reference proteome</keyword>
<keyword id="KW-0694">RNA-binding</keyword>
<keyword id="KW-0832">Ubl conjugation</keyword>
<keyword id="KW-0833">Ubl conjugation pathway</keyword>
<keyword id="KW-0946">Virion</keyword>
<keyword id="KW-0862">Zinc</keyword>
<reference key="1">
    <citation type="journal article" date="1985" name="Science">
        <title>Nucleotide sequence and expression of an AIDS-associated retrovirus (ARV-2).</title>
        <authorList>
            <person name="Sanchez-Pescador R."/>
            <person name="Power M.D."/>
            <person name="Barr P.J."/>
            <person name="Steimer K.S."/>
            <person name="Stempien M.M."/>
            <person name="Brown-Shimer S.L."/>
            <person name="Gee W.W."/>
            <person name="Renard A."/>
            <person name="Randolph A."/>
            <person name="Levy J.A."/>
            <person name="Dina D."/>
            <person name="Luciw P.A."/>
        </authorList>
    </citation>
    <scope>NUCLEOTIDE SEQUENCE [GENOMIC RNA]</scope>
</reference>
<name>VIF_HV1A2</name>
<feature type="chain" id="PRO_0000085314" description="Virion infectivity factor" evidence="2">
    <location>
        <begin position="1"/>
        <end position="192"/>
    </location>
</feature>
<feature type="chain" id="PRO_0000297499" description="p17" evidence="2">
    <location>
        <begin position="1"/>
        <end position="150"/>
    </location>
</feature>
<feature type="chain" id="PRO_0000297500" description="p7" evidence="2">
    <location>
        <begin position="151"/>
        <end position="192"/>
    </location>
</feature>
<feature type="region of interest" description="Interaction with host APOBEC3F; F1-box" evidence="2">
    <location>
        <begin position="14"/>
        <end position="17"/>
    </location>
</feature>
<feature type="region of interest" description="Interaction with host APOBEC3G; G-box" evidence="2">
    <location>
        <begin position="40"/>
        <end position="44"/>
    </location>
</feature>
<feature type="region of interest" description="Interaction with host APOBEC3F and APOBEC3G; FG-box" evidence="2">
    <location>
        <begin position="54"/>
        <end position="72"/>
    </location>
</feature>
<feature type="region of interest" description="Interaction with host APOBEC3F; F2-box" evidence="2">
    <location>
        <begin position="74"/>
        <end position="79"/>
    </location>
</feature>
<feature type="region of interest" description="RNA-binding" evidence="2">
    <location>
        <begin position="75"/>
        <end position="114"/>
    </location>
</feature>
<feature type="region of interest" description="SOCS box-like" evidence="2">
    <location>
        <begin position="151"/>
        <end position="180"/>
    </location>
</feature>
<feature type="region of interest" description="Multimerization" evidence="2">
    <location>
        <begin position="151"/>
        <end position="164"/>
    </location>
</feature>
<feature type="region of interest" description="Disordered" evidence="3">
    <location>
        <begin position="161"/>
        <end position="192"/>
    </location>
</feature>
<feature type="region of interest" description="Membrane association" evidence="2">
    <location>
        <begin position="171"/>
        <end position="172"/>
    </location>
</feature>
<feature type="short sequence motif" description="HCCH motif" evidence="2">
    <location>
        <begin position="108"/>
        <end position="139"/>
    </location>
</feature>
<feature type="short sequence motif" description="BC-box-like motif" evidence="2">
    <location>
        <begin position="144"/>
        <end position="153"/>
    </location>
</feature>
<feature type="compositionally biased region" description="Basic residues" evidence="3">
    <location>
        <begin position="176"/>
        <end position="186"/>
    </location>
</feature>
<feature type="binding site" evidence="2">
    <location>
        <position position="108"/>
    </location>
    <ligand>
        <name>Zn(2+)</name>
        <dbReference type="ChEBI" id="CHEBI:29105"/>
    </ligand>
</feature>
<feature type="binding site" evidence="2">
    <location>
        <position position="114"/>
    </location>
    <ligand>
        <name>Zn(2+)</name>
        <dbReference type="ChEBI" id="CHEBI:29105"/>
    </ligand>
</feature>
<feature type="binding site" evidence="2">
    <location>
        <position position="133"/>
    </location>
    <ligand>
        <name>Zn(2+)</name>
        <dbReference type="ChEBI" id="CHEBI:29105"/>
    </ligand>
</feature>
<feature type="binding site" evidence="2">
    <location>
        <position position="139"/>
    </location>
    <ligand>
        <name>Zn(2+)</name>
        <dbReference type="ChEBI" id="CHEBI:29105"/>
    </ligand>
</feature>
<feature type="site" description="Cleavage in virion (by viral protease)" evidence="2">
    <location>
        <begin position="150"/>
        <end position="151"/>
    </location>
</feature>
<feature type="modified residue" description="Phosphothreonine; by host MAP4K1" evidence="2">
    <location>
        <position position="96"/>
    </location>
</feature>
<feature type="modified residue" description="Phosphoserine; by host" evidence="2">
    <location>
        <position position="144"/>
    </location>
</feature>
<feature type="modified residue" description="Phosphothreonine; by host" evidence="2">
    <location>
        <position position="155"/>
    </location>
</feature>
<feature type="modified residue" description="Phosphoserine; by host MAP4K1" evidence="2">
    <location>
        <position position="165"/>
    </location>
</feature>
<feature type="modified residue" description="Phosphothreonine; by host" evidence="2">
    <location>
        <position position="188"/>
    </location>
</feature>
<sequence length="192" mass="22460">MENRWQVMIVWQVDRMRIRTWKSLVKHHMYISKKAKGWFYRHHYESTHPRVSSEVHIPLGDAKLVITTYWGLHTGEREWHLGQGVAIEWRKKKYSTQVDPGLADQLIHLHYFDCFSESAIKNAILGYRVSPRCEYQAGHNKVGSLQYLALAALITPKKTKPPLPSVKKLTEDRWNKPQKTKGHRGSHTMNGH</sequence>
<gene>
    <name evidence="2" type="primary">vif</name>
</gene>
<organism>
    <name type="scientific">Human immunodeficiency virus type 1 group M subtype B (isolate ARV2/SF2)</name>
    <name type="common">HIV-1</name>
    <dbReference type="NCBI Taxonomy" id="11685"/>
    <lineage>
        <taxon>Viruses</taxon>
        <taxon>Riboviria</taxon>
        <taxon>Pararnavirae</taxon>
        <taxon>Artverviricota</taxon>
        <taxon>Revtraviricetes</taxon>
        <taxon>Ortervirales</taxon>
        <taxon>Retroviridae</taxon>
        <taxon>Orthoretrovirinae</taxon>
        <taxon>Lentivirus</taxon>
        <taxon>Human immunodeficiency virus type 1</taxon>
    </lineage>
</organism>
<organismHost>
    <name type="scientific">Homo sapiens</name>
    <name type="common">Human</name>
    <dbReference type="NCBI Taxonomy" id="9606"/>
</organismHost>
<evidence type="ECO:0000250" key="1">
    <source>
        <dbReference type="UniProtKB" id="O70897"/>
    </source>
</evidence>
<evidence type="ECO:0000255" key="2">
    <source>
        <dbReference type="HAMAP-Rule" id="MF_04081"/>
    </source>
</evidence>
<evidence type="ECO:0000256" key="3">
    <source>
        <dbReference type="SAM" id="MobiDB-lite"/>
    </source>
</evidence>
<accession>P03402</accession>
<proteinExistence type="inferred from homology"/>
<comment type="function">
    <text evidence="2">Counteracts the innate antiviral activity of host APOBEC3F and APOBEC3G by promoting their ubiquitination and degradation. Acts as a substrate recognition component of an E3 ubiquitin-protein ligase complex: mechanistically, Vif hijacks a host cullin-5-RING E3 ubiquitin-protein ligase complex (ECS complex) and the transcription coactivator CBFB/CBF-beta to form an active E3 ubiquitin-protein ligase complex that targets APOBEC3G and APOBEC3F for polyubiquitination, leading to their degradation by the proteasome. Vif interaction with APOBEC3G also blocks its cytidine deaminase activity in a proteasome-independent manner, suggesting a dual inhibitory mechanism. May interact directly with APOBEC3G mRNA in order to inhibit its translation. Association with CBFB/CBF-beta also inhibits the transcription coactivator activity of CBFB/CBF-beta. Seems to play a role in viral morphology by affecting the stability of the viral nucleoprotein core. Finally, Vif also contributes to the G2 cell cycle arrest observed in HIV infected cells.</text>
</comment>
<comment type="subunit">
    <text evidence="1">Homomultimer; in vitro and presumably in vivo. Interacts with viral RNA and Pr55Gag precursor; these interactions mediate Vif incorporation into the virion. Interacts with the viral reverse transcriptase. Forms cullin-5-RING E3 ubiquitin-protein ligase complex (ECS complex) by interacting with host CUL5, RBX2, elongin BC complex (ELOB and ELOC) and CBFB/CBF-beta. Within the ECS complex, Vif interacts directly with host CUL5, ELOC and APOBEC (APOBEC3F and APOBEC3G) substrates. The ECS complex also contains some single-stranded RNA (ssRNA) that acts as a glue that bridges Vif with APOBEC (APOBEC3F and APOBEC3G) substrates. Interacts with host UBCE7IP1 isoform 3/ZIN and possibly with SAT. Interacts with host tyrosine kinases HCK and FYN; these interactions may decrease level of phosphorylated APOBEC3G incorporation into virions. Interacts with host ABCE1; this interaction may play a role in protecting viral RNA from damage during viral assembly. Interacts with host MDM2; this interaction targets Vif for degradation by the proteasome.</text>
</comment>
<comment type="subcellular location">
    <subcellularLocation>
        <location evidence="2">Host cytoplasm</location>
    </subcellularLocation>
    <subcellularLocation>
        <location evidence="2">Host cell membrane</location>
        <topology evidence="2">Peripheral membrane protein</topology>
        <orientation evidence="2">Cytoplasmic side</orientation>
    </subcellularLocation>
    <subcellularLocation>
        <location evidence="2">Virion</location>
    </subcellularLocation>
    <text evidence="2">In the cytoplasm, seems to colocalize with intermediate filament vimentin. A fraction is associated with the cytoplasmic side of cellular membranes, presumably via the interaction with Pr55Gag precursor. Incorporated in virions at a ratio of approximately 7 to 20 molecules per virion.</text>
</comment>
<comment type="induction">
    <text evidence="2">Expressed late during infection in a Rev-dependent manner.</text>
</comment>
<comment type="domain">
    <text evidence="2">The BC-like-box motif mediates the interaction with elongin BC complex.</text>
</comment>
<comment type="domain">
    <text evidence="2">The HCCH motif (H-x(5)-C-x(18)-C-x(5)-H) mediates the interaction with CUL5.</text>
</comment>
<comment type="PTM">
    <text evidence="2">Processed in virion by the viral protease.</text>
</comment>
<comment type="PTM">
    <text evidence="2">Highly phosphorylated on serine and threonine residues.</text>
</comment>
<comment type="PTM">
    <text evidence="2">Polyubiquitinated and degraded by the proteasome in the presence of APOBEC3G.</text>
</comment>
<comment type="miscellaneous">
    <text evidence="2">Vif-defective viruses show catastrophic failure in reverse transcription due to APOBEC-induced mutations that initiate a DNA base repair pathway and compromise the structural integrity of the ssDNA. In the absence of Vif, the virion is morphologically abnormal.</text>
</comment>
<comment type="miscellaneous">
    <text evidence="2">HIV-1 lineages are divided in three main groups, M (for Major), O (for Outlier), and N (for New, or Non-M, Non-O). The vast majority of strains found worldwide belong to the group M. Group O seems to be endemic to and largely confined to Cameroon and neighboring countries in West Central Africa, where these viruses represent a small minority of HIV-1 strains. The group N is represented by a limited number of isolates from Cameroonian persons. The group M is further subdivided in 9 clades or subtypes (A to D, F to H, J and K).</text>
</comment>
<comment type="miscellaneous">
    <text evidence="2">Required for replication in 'nonpermissive' cells, including primary T-cells, macrophages and certain T-cell lines, but is dispensable for replication in 'permissive' cell lines, such as 293T cells. In nonpermissive cells, Vif-defective viruses can produce virions, but they fail to complete reverse transcription and cannot successfully infect new cells.</text>
</comment>
<comment type="similarity">
    <text evidence="2">Belongs to the primate lentivirus group Vif protein family.</text>
</comment>
<dbReference type="EMBL" id="K02007">
    <property type="protein sequence ID" value="AAB59877.1"/>
    <property type="molecule type" value="Genomic_RNA"/>
</dbReference>
<dbReference type="PIR" id="A04003">
    <property type="entry name" value="ASLJO1"/>
</dbReference>
<dbReference type="SMR" id="P03402"/>
<dbReference type="Proteomes" id="UP000007688">
    <property type="component" value="Genome"/>
</dbReference>
<dbReference type="GO" id="GO:0030430">
    <property type="term" value="C:host cell cytoplasm"/>
    <property type="evidence" value="ECO:0007669"/>
    <property type="project" value="UniProtKB-SubCell"/>
</dbReference>
<dbReference type="GO" id="GO:0020002">
    <property type="term" value="C:host cell plasma membrane"/>
    <property type="evidence" value="ECO:0007669"/>
    <property type="project" value="UniProtKB-SubCell"/>
</dbReference>
<dbReference type="GO" id="GO:0016020">
    <property type="term" value="C:membrane"/>
    <property type="evidence" value="ECO:0007669"/>
    <property type="project" value="UniProtKB-UniRule"/>
</dbReference>
<dbReference type="GO" id="GO:0044423">
    <property type="term" value="C:virion component"/>
    <property type="evidence" value="ECO:0007669"/>
    <property type="project" value="UniProtKB-UniRule"/>
</dbReference>
<dbReference type="GO" id="GO:0046872">
    <property type="term" value="F:metal ion binding"/>
    <property type="evidence" value="ECO:0007669"/>
    <property type="project" value="UniProtKB-KW"/>
</dbReference>
<dbReference type="GO" id="GO:0003723">
    <property type="term" value="F:RNA binding"/>
    <property type="evidence" value="ECO:0007669"/>
    <property type="project" value="UniProtKB-UniRule"/>
</dbReference>
<dbReference type="GO" id="GO:0019058">
    <property type="term" value="P:viral life cycle"/>
    <property type="evidence" value="ECO:0007669"/>
    <property type="project" value="InterPro"/>
</dbReference>
<dbReference type="HAMAP" id="MF_04081">
    <property type="entry name" value="HIV_VIF"/>
    <property type="match status" value="1"/>
</dbReference>
<dbReference type="InterPro" id="IPR000475">
    <property type="entry name" value="Vif"/>
</dbReference>
<dbReference type="Pfam" id="PF00559">
    <property type="entry name" value="Vif"/>
    <property type="match status" value="1"/>
</dbReference>
<dbReference type="PRINTS" id="PR00349">
    <property type="entry name" value="VIRIONINFFCT"/>
</dbReference>